<proteinExistence type="inferred from homology"/>
<dbReference type="EC" id="6.1.1.16"/>
<dbReference type="EMBL" id="AE001363">
    <property type="protein sequence ID" value="AAD19070.1"/>
    <property type="molecule type" value="Genomic_DNA"/>
</dbReference>
<dbReference type="EMBL" id="AE002161">
    <property type="protein sequence ID" value="AAF38714.1"/>
    <property type="molecule type" value="Genomic_DNA"/>
</dbReference>
<dbReference type="EMBL" id="BA000008">
    <property type="protein sequence ID" value="BAA99140.1"/>
    <property type="molecule type" value="Genomic_DNA"/>
</dbReference>
<dbReference type="EMBL" id="AE009440">
    <property type="protein sequence ID" value="AAP98895.1"/>
    <property type="molecule type" value="Genomic_DNA"/>
</dbReference>
<dbReference type="PIR" id="B86607">
    <property type="entry name" value="B86607"/>
</dbReference>
<dbReference type="PIR" id="F72016">
    <property type="entry name" value="F72016"/>
</dbReference>
<dbReference type="RefSeq" id="NP_225127.1">
    <property type="nucleotide sequence ID" value="NC_000922.1"/>
</dbReference>
<dbReference type="RefSeq" id="WP_010883567.1">
    <property type="nucleotide sequence ID" value="NZ_LN847257.1"/>
</dbReference>
<dbReference type="SMR" id="Q9Z6X4"/>
<dbReference type="STRING" id="406984.CPK_ORF00344"/>
<dbReference type="GeneID" id="45050988"/>
<dbReference type="KEGG" id="cpa:CP_0931"/>
<dbReference type="KEGG" id="cpj:cysS"/>
<dbReference type="KEGG" id="cpn:CPn_0932"/>
<dbReference type="KEGG" id="cpt:CpB0966"/>
<dbReference type="PATRIC" id="fig|115713.3.peg.1018"/>
<dbReference type="eggNOG" id="COG0215">
    <property type="taxonomic scope" value="Bacteria"/>
</dbReference>
<dbReference type="HOGENOM" id="CLU_013528_0_1_0"/>
<dbReference type="OrthoDB" id="9815130at2"/>
<dbReference type="Proteomes" id="UP000000583">
    <property type="component" value="Chromosome"/>
</dbReference>
<dbReference type="Proteomes" id="UP000000801">
    <property type="component" value="Chromosome"/>
</dbReference>
<dbReference type="GO" id="GO:0005829">
    <property type="term" value="C:cytosol"/>
    <property type="evidence" value="ECO:0007669"/>
    <property type="project" value="TreeGrafter"/>
</dbReference>
<dbReference type="GO" id="GO:0005524">
    <property type="term" value="F:ATP binding"/>
    <property type="evidence" value="ECO:0007669"/>
    <property type="project" value="UniProtKB-UniRule"/>
</dbReference>
<dbReference type="GO" id="GO:0004817">
    <property type="term" value="F:cysteine-tRNA ligase activity"/>
    <property type="evidence" value="ECO:0007669"/>
    <property type="project" value="UniProtKB-UniRule"/>
</dbReference>
<dbReference type="GO" id="GO:0008270">
    <property type="term" value="F:zinc ion binding"/>
    <property type="evidence" value="ECO:0007669"/>
    <property type="project" value="UniProtKB-UniRule"/>
</dbReference>
<dbReference type="GO" id="GO:0006423">
    <property type="term" value="P:cysteinyl-tRNA aminoacylation"/>
    <property type="evidence" value="ECO:0007669"/>
    <property type="project" value="UniProtKB-UniRule"/>
</dbReference>
<dbReference type="CDD" id="cd00672">
    <property type="entry name" value="CysRS_core"/>
    <property type="match status" value="1"/>
</dbReference>
<dbReference type="FunFam" id="3.40.50.620:FF:000130">
    <property type="entry name" value="Cysteine--tRNA ligase"/>
    <property type="match status" value="1"/>
</dbReference>
<dbReference type="Gene3D" id="1.20.120.1910">
    <property type="entry name" value="Cysteine-tRNA ligase, C-terminal anti-codon recognition domain"/>
    <property type="match status" value="1"/>
</dbReference>
<dbReference type="Gene3D" id="3.40.50.620">
    <property type="entry name" value="HUPs"/>
    <property type="match status" value="1"/>
</dbReference>
<dbReference type="HAMAP" id="MF_00041">
    <property type="entry name" value="Cys_tRNA_synth"/>
    <property type="match status" value="1"/>
</dbReference>
<dbReference type="InterPro" id="IPR015803">
    <property type="entry name" value="Cys-tRNA-ligase"/>
</dbReference>
<dbReference type="InterPro" id="IPR015273">
    <property type="entry name" value="Cys-tRNA-synt_Ia_DALR"/>
</dbReference>
<dbReference type="InterPro" id="IPR024909">
    <property type="entry name" value="Cys-tRNA/MSH_ligase"/>
</dbReference>
<dbReference type="InterPro" id="IPR056411">
    <property type="entry name" value="CysS_C"/>
</dbReference>
<dbReference type="InterPro" id="IPR014729">
    <property type="entry name" value="Rossmann-like_a/b/a_fold"/>
</dbReference>
<dbReference type="InterPro" id="IPR032678">
    <property type="entry name" value="tRNA-synt_1_cat_dom"/>
</dbReference>
<dbReference type="InterPro" id="IPR009080">
    <property type="entry name" value="tRNAsynth_Ia_anticodon-bd"/>
</dbReference>
<dbReference type="NCBIfam" id="TIGR00435">
    <property type="entry name" value="cysS"/>
    <property type="match status" value="1"/>
</dbReference>
<dbReference type="PANTHER" id="PTHR10890:SF3">
    <property type="entry name" value="CYSTEINE--TRNA LIGASE, CYTOPLASMIC"/>
    <property type="match status" value="1"/>
</dbReference>
<dbReference type="PANTHER" id="PTHR10890">
    <property type="entry name" value="CYSTEINYL-TRNA SYNTHETASE"/>
    <property type="match status" value="1"/>
</dbReference>
<dbReference type="Pfam" id="PF23493">
    <property type="entry name" value="CysS_C"/>
    <property type="match status" value="1"/>
</dbReference>
<dbReference type="Pfam" id="PF09190">
    <property type="entry name" value="DALR_2"/>
    <property type="match status" value="1"/>
</dbReference>
<dbReference type="Pfam" id="PF01406">
    <property type="entry name" value="tRNA-synt_1e"/>
    <property type="match status" value="1"/>
</dbReference>
<dbReference type="PRINTS" id="PR00983">
    <property type="entry name" value="TRNASYNTHCYS"/>
</dbReference>
<dbReference type="SMART" id="SM00840">
    <property type="entry name" value="DALR_2"/>
    <property type="match status" value="1"/>
</dbReference>
<dbReference type="SUPFAM" id="SSF47323">
    <property type="entry name" value="Anticodon-binding domain of a subclass of class I aminoacyl-tRNA synthetases"/>
    <property type="match status" value="1"/>
</dbReference>
<dbReference type="SUPFAM" id="SSF52374">
    <property type="entry name" value="Nucleotidylyl transferase"/>
    <property type="match status" value="1"/>
</dbReference>
<comment type="catalytic activity">
    <reaction>
        <text>tRNA(Cys) + L-cysteine + ATP = L-cysteinyl-tRNA(Cys) + AMP + diphosphate</text>
        <dbReference type="Rhea" id="RHEA:17773"/>
        <dbReference type="Rhea" id="RHEA-COMP:9661"/>
        <dbReference type="Rhea" id="RHEA-COMP:9679"/>
        <dbReference type="ChEBI" id="CHEBI:30616"/>
        <dbReference type="ChEBI" id="CHEBI:33019"/>
        <dbReference type="ChEBI" id="CHEBI:35235"/>
        <dbReference type="ChEBI" id="CHEBI:78442"/>
        <dbReference type="ChEBI" id="CHEBI:78517"/>
        <dbReference type="ChEBI" id="CHEBI:456215"/>
        <dbReference type="EC" id="6.1.1.16"/>
    </reaction>
</comment>
<comment type="cofactor">
    <cofactor evidence="1">
        <name>Zn(2+)</name>
        <dbReference type="ChEBI" id="CHEBI:29105"/>
    </cofactor>
    <text evidence="1">Binds 1 zinc ion per subunit.</text>
</comment>
<comment type="subunit">
    <text evidence="1">Monomer.</text>
</comment>
<comment type="subcellular location">
    <subcellularLocation>
        <location evidence="1">Cytoplasm</location>
    </subcellularLocation>
</comment>
<comment type="similarity">
    <text evidence="2">Belongs to the class-I aminoacyl-tRNA synthetase family.</text>
</comment>
<organism>
    <name type="scientific">Chlamydia pneumoniae</name>
    <name type="common">Chlamydophila pneumoniae</name>
    <dbReference type="NCBI Taxonomy" id="83558"/>
    <lineage>
        <taxon>Bacteria</taxon>
        <taxon>Pseudomonadati</taxon>
        <taxon>Chlamydiota</taxon>
        <taxon>Chlamydiia</taxon>
        <taxon>Chlamydiales</taxon>
        <taxon>Chlamydiaceae</taxon>
        <taxon>Chlamydia/Chlamydophila group</taxon>
        <taxon>Chlamydia</taxon>
    </lineage>
</organism>
<keyword id="KW-0030">Aminoacyl-tRNA synthetase</keyword>
<keyword id="KW-0067">ATP-binding</keyword>
<keyword id="KW-0963">Cytoplasm</keyword>
<keyword id="KW-0436">Ligase</keyword>
<keyword id="KW-0479">Metal-binding</keyword>
<keyword id="KW-0547">Nucleotide-binding</keyword>
<keyword id="KW-0648">Protein biosynthesis</keyword>
<keyword id="KW-0862">Zinc</keyword>
<gene>
    <name type="primary">cysS</name>
    <name type="ordered locus">CPn_0932</name>
    <name type="ordered locus">CP_0931</name>
    <name type="ordered locus">CpB0966</name>
</gene>
<protein>
    <recommendedName>
        <fullName>Cysteine--tRNA ligase</fullName>
        <ecNumber>6.1.1.16</ecNumber>
    </recommendedName>
    <alternativeName>
        <fullName>Cysteinyl-tRNA synthetase</fullName>
        <shortName>CysRS</shortName>
    </alternativeName>
</protein>
<accession>Q9Z6X4</accession>
<accession>Q9JQE0</accession>
<feature type="chain" id="PRO_0000159377" description="Cysteine--tRNA ligase">
    <location>
        <begin position="1"/>
        <end position="474"/>
    </location>
</feature>
<feature type="short sequence motif" description="'HIGH' region">
    <location>
        <begin position="36"/>
        <end position="46"/>
    </location>
</feature>
<feature type="short sequence motif" description="'KMSKS' region">
    <location>
        <begin position="276"/>
        <end position="280"/>
    </location>
</feature>
<feature type="binding site" evidence="1">
    <location>
        <position position="34"/>
    </location>
    <ligand>
        <name>Zn(2+)</name>
        <dbReference type="ChEBI" id="CHEBI:29105"/>
    </ligand>
</feature>
<feature type="binding site" evidence="1">
    <location>
        <position position="219"/>
    </location>
    <ligand>
        <name>Zn(2+)</name>
        <dbReference type="ChEBI" id="CHEBI:29105"/>
    </ligand>
</feature>
<feature type="binding site" evidence="1">
    <location>
        <position position="244"/>
    </location>
    <ligand>
        <name>Zn(2+)</name>
        <dbReference type="ChEBI" id="CHEBI:29105"/>
    </ligand>
</feature>
<feature type="binding site" evidence="1">
    <location>
        <position position="248"/>
    </location>
    <ligand>
        <name>Zn(2+)</name>
        <dbReference type="ChEBI" id="CHEBI:29105"/>
    </ligand>
</feature>
<feature type="binding site" evidence="1">
    <location>
        <position position="279"/>
    </location>
    <ligand>
        <name>ATP</name>
        <dbReference type="ChEBI" id="CHEBI:30616"/>
    </ligand>
</feature>
<feature type="sequence conflict" description="In Ref. 4; AAP98895." evidence="2" ref="4">
    <original>K</original>
    <variation>R</variation>
    <location>
        <position position="470"/>
    </location>
</feature>
<name>SYC_CHLPN</name>
<sequence>MAFSHIEGLYFYNTASQKKELFFPNHTPVRLYTCGPTVYDYAHIGNFRTYVFEDILKRTLVFFGYSVTHVMNITDVEDKTIAGASKKNIPLQEYTQPYTEAFFEDLDTLNIARADFYPHATHYIPQMIQAITKLLEQGIAYIGQDASVYFSLNRFPNYGKLSHLDLSSLRCCSRISADEYDKENPSDFVLWKAYNPERDGVIYWESPFGKGRPGWHLECSIMAMELLGDSLDIHAGGVDNIFPHHENEIAQSEALSGKPFARYWLHSEHLLIDGKKMSKSLGNFLTLRDLLHQEFTGQEVRYMLLQSHYRTQLNFTEEALLACRHALRRLKDFVSRLEGVDLPGESPLPRTLDSSSQFIEAFSRALANDLNVSTGFASLFDFVHEINTLIDQGHFSKADSLYILDTLKKVDTVLGVLPLTTSVCIPETVMQLVAEREEARKTKNWAMADTLRDEILAAGFLVEDSKSGPKVKPL</sequence>
<reference key="1">
    <citation type="journal article" date="1999" name="Nat. Genet.">
        <title>Comparative genomes of Chlamydia pneumoniae and C. trachomatis.</title>
        <authorList>
            <person name="Kalman S."/>
            <person name="Mitchell W.P."/>
            <person name="Marathe R."/>
            <person name="Lammel C.J."/>
            <person name="Fan J."/>
            <person name="Hyman R.W."/>
            <person name="Olinger L."/>
            <person name="Grimwood J."/>
            <person name="Davis R.W."/>
            <person name="Stephens R.S."/>
        </authorList>
    </citation>
    <scope>NUCLEOTIDE SEQUENCE [LARGE SCALE GENOMIC DNA]</scope>
    <source>
        <strain>CWL029</strain>
    </source>
</reference>
<reference key="2">
    <citation type="journal article" date="2000" name="Nucleic Acids Res.">
        <title>Genome sequences of Chlamydia trachomatis MoPn and Chlamydia pneumoniae AR39.</title>
        <authorList>
            <person name="Read T.D."/>
            <person name="Brunham R.C."/>
            <person name="Shen C."/>
            <person name="Gill S.R."/>
            <person name="Heidelberg J.F."/>
            <person name="White O."/>
            <person name="Hickey E.K."/>
            <person name="Peterson J.D."/>
            <person name="Utterback T.R."/>
            <person name="Berry K.J."/>
            <person name="Bass S."/>
            <person name="Linher K.D."/>
            <person name="Weidman J.F."/>
            <person name="Khouri H.M."/>
            <person name="Craven B."/>
            <person name="Bowman C."/>
            <person name="Dodson R.J."/>
            <person name="Gwinn M.L."/>
            <person name="Nelson W.C."/>
            <person name="DeBoy R.T."/>
            <person name="Kolonay J.F."/>
            <person name="McClarty G."/>
            <person name="Salzberg S.L."/>
            <person name="Eisen J.A."/>
            <person name="Fraser C.M."/>
        </authorList>
    </citation>
    <scope>NUCLEOTIDE SEQUENCE [LARGE SCALE GENOMIC DNA]</scope>
    <source>
        <strain>AR39</strain>
    </source>
</reference>
<reference key="3">
    <citation type="journal article" date="2000" name="Nucleic Acids Res.">
        <title>Comparison of whole genome sequences of Chlamydia pneumoniae J138 from Japan and CWL029 from USA.</title>
        <authorList>
            <person name="Shirai M."/>
            <person name="Hirakawa H."/>
            <person name="Kimoto M."/>
            <person name="Tabuchi M."/>
            <person name="Kishi F."/>
            <person name="Ouchi K."/>
            <person name="Shiba T."/>
            <person name="Ishii K."/>
            <person name="Hattori M."/>
            <person name="Kuhara S."/>
            <person name="Nakazawa T."/>
        </authorList>
    </citation>
    <scope>NUCLEOTIDE SEQUENCE [LARGE SCALE GENOMIC DNA]</scope>
    <source>
        <strain>J138</strain>
    </source>
</reference>
<reference key="4">
    <citation type="submission" date="2002-05" db="EMBL/GenBank/DDBJ databases">
        <title>The genome sequence of Chlamydia pneumoniae TW183 and comparison with other Chlamydia strains based on whole genome sequence analysis.</title>
        <authorList>
            <person name="Geng M.M."/>
            <person name="Schuhmacher A."/>
            <person name="Muehldorfer I."/>
            <person name="Bensch K.W."/>
            <person name="Schaefer K.P."/>
            <person name="Schneider S."/>
            <person name="Pohl T."/>
            <person name="Essig A."/>
            <person name="Marre R."/>
            <person name="Melchers K."/>
        </authorList>
    </citation>
    <scope>NUCLEOTIDE SEQUENCE [LARGE SCALE GENOMIC DNA]</scope>
    <source>
        <strain>TW-183</strain>
    </source>
</reference>
<evidence type="ECO:0000250" key="1"/>
<evidence type="ECO:0000305" key="2"/>